<gene>
    <name evidence="1" type="primary">coaD</name>
    <name type="ordered locus">Athe_1227</name>
</gene>
<dbReference type="EC" id="2.7.7.3" evidence="1"/>
<dbReference type="EMBL" id="CP001393">
    <property type="protein sequence ID" value="ACM60327.1"/>
    <property type="molecule type" value="Genomic_DNA"/>
</dbReference>
<dbReference type="RefSeq" id="WP_015907719.1">
    <property type="nucleotide sequence ID" value="NC_012034.1"/>
</dbReference>
<dbReference type="SMR" id="B9MRM3"/>
<dbReference type="STRING" id="521460.Athe_1227"/>
<dbReference type="GeneID" id="31772575"/>
<dbReference type="KEGG" id="ate:Athe_1227"/>
<dbReference type="eggNOG" id="COG0669">
    <property type="taxonomic scope" value="Bacteria"/>
</dbReference>
<dbReference type="HOGENOM" id="CLU_100149_0_1_9"/>
<dbReference type="UniPathway" id="UPA00241">
    <property type="reaction ID" value="UER00355"/>
</dbReference>
<dbReference type="Proteomes" id="UP000007723">
    <property type="component" value="Chromosome"/>
</dbReference>
<dbReference type="GO" id="GO:0005737">
    <property type="term" value="C:cytoplasm"/>
    <property type="evidence" value="ECO:0007669"/>
    <property type="project" value="UniProtKB-SubCell"/>
</dbReference>
<dbReference type="GO" id="GO:0005524">
    <property type="term" value="F:ATP binding"/>
    <property type="evidence" value="ECO:0007669"/>
    <property type="project" value="UniProtKB-KW"/>
</dbReference>
<dbReference type="GO" id="GO:0004595">
    <property type="term" value="F:pantetheine-phosphate adenylyltransferase activity"/>
    <property type="evidence" value="ECO:0007669"/>
    <property type="project" value="UniProtKB-UniRule"/>
</dbReference>
<dbReference type="GO" id="GO:0015937">
    <property type="term" value="P:coenzyme A biosynthetic process"/>
    <property type="evidence" value="ECO:0007669"/>
    <property type="project" value="UniProtKB-UniRule"/>
</dbReference>
<dbReference type="CDD" id="cd02163">
    <property type="entry name" value="PPAT"/>
    <property type="match status" value="1"/>
</dbReference>
<dbReference type="FunFam" id="3.40.50.620:FF:000012">
    <property type="entry name" value="Phosphopantetheine adenylyltransferase"/>
    <property type="match status" value="1"/>
</dbReference>
<dbReference type="Gene3D" id="3.40.50.620">
    <property type="entry name" value="HUPs"/>
    <property type="match status" value="1"/>
</dbReference>
<dbReference type="HAMAP" id="MF_00151">
    <property type="entry name" value="PPAT_bact"/>
    <property type="match status" value="1"/>
</dbReference>
<dbReference type="InterPro" id="IPR004821">
    <property type="entry name" value="Cyt_trans-like"/>
</dbReference>
<dbReference type="InterPro" id="IPR001980">
    <property type="entry name" value="PPAT"/>
</dbReference>
<dbReference type="InterPro" id="IPR014729">
    <property type="entry name" value="Rossmann-like_a/b/a_fold"/>
</dbReference>
<dbReference type="NCBIfam" id="TIGR01510">
    <property type="entry name" value="coaD_prev_kdtB"/>
    <property type="match status" value="1"/>
</dbReference>
<dbReference type="NCBIfam" id="TIGR00125">
    <property type="entry name" value="cyt_tran_rel"/>
    <property type="match status" value="1"/>
</dbReference>
<dbReference type="PANTHER" id="PTHR21342">
    <property type="entry name" value="PHOSPHOPANTETHEINE ADENYLYLTRANSFERASE"/>
    <property type="match status" value="1"/>
</dbReference>
<dbReference type="PANTHER" id="PTHR21342:SF1">
    <property type="entry name" value="PHOSPHOPANTETHEINE ADENYLYLTRANSFERASE"/>
    <property type="match status" value="1"/>
</dbReference>
<dbReference type="Pfam" id="PF01467">
    <property type="entry name" value="CTP_transf_like"/>
    <property type="match status" value="1"/>
</dbReference>
<dbReference type="PRINTS" id="PR01020">
    <property type="entry name" value="LPSBIOSNTHSS"/>
</dbReference>
<dbReference type="SUPFAM" id="SSF52374">
    <property type="entry name" value="Nucleotidylyl transferase"/>
    <property type="match status" value="1"/>
</dbReference>
<sequence>MKIGVYPGSFDPVTNGHLDIIERASKIFDKLIVAVLVNPNKTPVFDIEERVELLKETTEHLPNVEVKAFKGLLIDFMKQENAKVIVKGLRAVSDFEYEFQMALLNKKLEPSIETIFMMTNSKYSYLSSSMVKEVARFGGCIEDLVPEKIAKKVMKKLNKKYTEMEEK</sequence>
<feature type="chain" id="PRO_1000123258" description="Phosphopantetheine adenylyltransferase">
    <location>
        <begin position="1"/>
        <end position="167"/>
    </location>
</feature>
<feature type="binding site" evidence="1">
    <location>
        <begin position="9"/>
        <end position="10"/>
    </location>
    <ligand>
        <name>ATP</name>
        <dbReference type="ChEBI" id="CHEBI:30616"/>
    </ligand>
</feature>
<feature type="binding site" evidence="1">
    <location>
        <position position="9"/>
    </location>
    <ligand>
        <name>substrate</name>
    </ligand>
</feature>
<feature type="binding site" evidence="1">
    <location>
        <position position="17"/>
    </location>
    <ligand>
        <name>ATP</name>
        <dbReference type="ChEBI" id="CHEBI:30616"/>
    </ligand>
</feature>
<feature type="binding site" evidence="1">
    <location>
        <position position="41"/>
    </location>
    <ligand>
        <name>substrate</name>
    </ligand>
</feature>
<feature type="binding site" evidence="1">
    <location>
        <position position="73"/>
    </location>
    <ligand>
        <name>substrate</name>
    </ligand>
</feature>
<feature type="binding site" evidence="1">
    <location>
        <position position="87"/>
    </location>
    <ligand>
        <name>substrate</name>
    </ligand>
</feature>
<feature type="binding site" evidence="1">
    <location>
        <begin position="88"/>
        <end position="90"/>
    </location>
    <ligand>
        <name>ATP</name>
        <dbReference type="ChEBI" id="CHEBI:30616"/>
    </ligand>
</feature>
<feature type="binding site" evidence="1">
    <location>
        <position position="98"/>
    </location>
    <ligand>
        <name>ATP</name>
        <dbReference type="ChEBI" id="CHEBI:30616"/>
    </ligand>
</feature>
<feature type="binding site" evidence="1">
    <location>
        <begin position="123"/>
        <end position="129"/>
    </location>
    <ligand>
        <name>ATP</name>
        <dbReference type="ChEBI" id="CHEBI:30616"/>
    </ligand>
</feature>
<feature type="site" description="Transition state stabilizer" evidence="1">
    <location>
        <position position="17"/>
    </location>
</feature>
<proteinExistence type="inferred from homology"/>
<evidence type="ECO:0000255" key="1">
    <source>
        <dbReference type="HAMAP-Rule" id="MF_00151"/>
    </source>
</evidence>
<reference key="1">
    <citation type="submission" date="2009-01" db="EMBL/GenBank/DDBJ databases">
        <title>Complete sequence of chromosome of Caldicellulosiruptor becscii DSM 6725.</title>
        <authorList>
            <person name="Lucas S."/>
            <person name="Copeland A."/>
            <person name="Lapidus A."/>
            <person name="Glavina del Rio T."/>
            <person name="Tice H."/>
            <person name="Bruce D."/>
            <person name="Goodwin L."/>
            <person name="Pitluck S."/>
            <person name="Sims D."/>
            <person name="Meincke L."/>
            <person name="Brettin T."/>
            <person name="Detter J.C."/>
            <person name="Han C."/>
            <person name="Larimer F."/>
            <person name="Land M."/>
            <person name="Hauser L."/>
            <person name="Kyrpides N."/>
            <person name="Ovchinnikova G."/>
            <person name="Kataeva I."/>
            <person name="Adams M.W.W."/>
        </authorList>
    </citation>
    <scope>NUCLEOTIDE SEQUENCE [LARGE SCALE GENOMIC DNA]</scope>
    <source>
        <strain>ATCC BAA-1888 / DSM 6725 / KCTC 15123 / Z-1320</strain>
    </source>
</reference>
<name>COAD_CALBD</name>
<comment type="function">
    <text evidence="1">Reversibly transfers an adenylyl group from ATP to 4'-phosphopantetheine, yielding dephospho-CoA (dPCoA) and pyrophosphate.</text>
</comment>
<comment type="catalytic activity">
    <reaction evidence="1">
        <text>(R)-4'-phosphopantetheine + ATP + H(+) = 3'-dephospho-CoA + diphosphate</text>
        <dbReference type="Rhea" id="RHEA:19801"/>
        <dbReference type="ChEBI" id="CHEBI:15378"/>
        <dbReference type="ChEBI" id="CHEBI:30616"/>
        <dbReference type="ChEBI" id="CHEBI:33019"/>
        <dbReference type="ChEBI" id="CHEBI:57328"/>
        <dbReference type="ChEBI" id="CHEBI:61723"/>
        <dbReference type="EC" id="2.7.7.3"/>
    </reaction>
</comment>
<comment type="cofactor">
    <cofactor evidence="1">
        <name>Mg(2+)</name>
        <dbReference type="ChEBI" id="CHEBI:18420"/>
    </cofactor>
</comment>
<comment type="pathway">
    <text evidence="1">Cofactor biosynthesis; coenzyme A biosynthesis; CoA from (R)-pantothenate: step 4/5.</text>
</comment>
<comment type="subunit">
    <text evidence="1">Homohexamer.</text>
</comment>
<comment type="subcellular location">
    <subcellularLocation>
        <location evidence="1">Cytoplasm</location>
    </subcellularLocation>
</comment>
<comment type="similarity">
    <text evidence="1">Belongs to the bacterial CoaD family.</text>
</comment>
<organism>
    <name type="scientific">Caldicellulosiruptor bescii (strain ATCC BAA-1888 / DSM 6725 / KCTC 15123 / Z-1320)</name>
    <name type="common">Anaerocellum thermophilum</name>
    <dbReference type="NCBI Taxonomy" id="521460"/>
    <lineage>
        <taxon>Bacteria</taxon>
        <taxon>Bacillati</taxon>
        <taxon>Bacillota</taxon>
        <taxon>Bacillota incertae sedis</taxon>
        <taxon>Caldicellulosiruptorales</taxon>
        <taxon>Caldicellulosiruptoraceae</taxon>
        <taxon>Caldicellulosiruptor</taxon>
    </lineage>
</organism>
<accession>B9MRM3</accession>
<keyword id="KW-0067">ATP-binding</keyword>
<keyword id="KW-0173">Coenzyme A biosynthesis</keyword>
<keyword id="KW-0963">Cytoplasm</keyword>
<keyword id="KW-0460">Magnesium</keyword>
<keyword id="KW-0547">Nucleotide-binding</keyword>
<keyword id="KW-0548">Nucleotidyltransferase</keyword>
<keyword id="KW-0808">Transferase</keyword>
<protein>
    <recommendedName>
        <fullName evidence="1">Phosphopantetheine adenylyltransferase</fullName>
        <ecNumber evidence="1">2.7.7.3</ecNumber>
    </recommendedName>
    <alternativeName>
        <fullName evidence="1">Dephospho-CoA pyrophosphorylase</fullName>
    </alternativeName>
    <alternativeName>
        <fullName evidence="1">Pantetheine-phosphate adenylyltransferase</fullName>
        <shortName evidence="1">PPAT</shortName>
    </alternativeName>
</protein>